<dbReference type="EC" id="2.7.11.1"/>
<dbReference type="EMBL" id="L02121">
    <property type="protein sequence ID" value="AAA40902.1"/>
    <property type="molecule type" value="mRNA"/>
</dbReference>
<dbReference type="PIR" id="A46365">
    <property type="entry name" value="A46365"/>
</dbReference>
<dbReference type="RefSeq" id="NP_543161.1">
    <property type="nucleotide sequence ID" value="NM_080885.2"/>
</dbReference>
<dbReference type="SMR" id="Q03114"/>
<dbReference type="BioGRID" id="250852">
    <property type="interactions" value="14"/>
</dbReference>
<dbReference type="CORUM" id="Q03114"/>
<dbReference type="DIP" id="DIP-29351N"/>
<dbReference type="ELM" id="Q03114"/>
<dbReference type="FunCoup" id="Q03114">
    <property type="interactions" value="2732"/>
</dbReference>
<dbReference type="IntAct" id="Q03114">
    <property type="interactions" value="8"/>
</dbReference>
<dbReference type="MINT" id="Q03114"/>
<dbReference type="STRING" id="10116.ENSRNOP00000011052"/>
<dbReference type="BindingDB" id="Q03114"/>
<dbReference type="ChEMBL" id="CHEMBL5901"/>
<dbReference type="DrugCentral" id="Q03114"/>
<dbReference type="GlyGen" id="Q03114">
    <property type="glycosylation" value="3 sites, 1 O-linked glycan (3 sites)"/>
</dbReference>
<dbReference type="iPTMnet" id="Q03114"/>
<dbReference type="PhosphoSitePlus" id="Q03114"/>
<dbReference type="SwissPalm" id="Q03114"/>
<dbReference type="jPOST" id="Q03114"/>
<dbReference type="PaxDb" id="10116-ENSRNOP00000011052"/>
<dbReference type="GeneID" id="140908"/>
<dbReference type="KEGG" id="rno:140908"/>
<dbReference type="AGR" id="RGD:70514"/>
<dbReference type="CTD" id="1020"/>
<dbReference type="RGD" id="70514">
    <property type="gene designation" value="Cdk5"/>
</dbReference>
<dbReference type="VEuPathDB" id="HostDB:ENSRNOG00000008017"/>
<dbReference type="eggNOG" id="KOG0662">
    <property type="taxonomic scope" value="Eukaryota"/>
</dbReference>
<dbReference type="HOGENOM" id="CLU_000288_181_1_1"/>
<dbReference type="InParanoid" id="Q03114"/>
<dbReference type="OrthoDB" id="1652at9989"/>
<dbReference type="PhylomeDB" id="Q03114"/>
<dbReference type="TreeFam" id="TF101023"/>
<dbReference type="BRENDA" id="2.7.11.22">
    <property type="organism ID" value="5301"/>
</dbReference>
<dbReference type="Reactome" id="R-RNO-180024">
    <property type="pathway name" value="DARPP-32 events"/>
</dbReference>
<dbReference type="Reactome" id="R-RNO-399956">
    <property type="pathway name" value="CRMPs in Sema3A signaling"/>
</dbReference>
<dbReference type="Reactome" id="R-RNO-6804756">
    <property type="pathway name" value="Regulation of TP53 Activity through Phosphorylation"/>
</dbReference>
<dbReference type="Reactome" id="R-RNO-9841922">
    <property type="pathway name" value="MLL4 and MLL3 complexes regulate expression of PPARG target genes in adipogenesis and hepatic steatosis"/>
</dbReference>
<dbReference type="PRO" id="PR:Q03114"/>
<dbReference type="Proteomes" id="UP000002494">
    <property type="component" value="Chromosome 4"/>
</dbReference>
<dbReference type="Bgee" id="ENSRNOG00000008017">
    <property type="expression patterns" value="Expressed in frontal cortex and 20 other cell types or tissues"/>
</dbReference>
<dbReference type="GO" id="GO:0030424">
    <property type="term" value="C:axon"/>
    <property type="evidence" value="ECO:0000314"/>
    <property type="project" value="UniProtKB"/>
</dbReference>
<dbReference type="GO" id="GO:0030054">
    <property type="term" value="C:cell junction"/>
    <property type="evidence" value="ECO:0000304"/>
    <property type="project" value="RGD"/>
</dbReference>
<dbReference type="GO" id="GO:0000307">
    <property type="term" value="C:cyclin-dependent protein kinase holoenzyme complex"/>
    <property type="evidence" value="ECO:0000266"/>
    <property type="project" value="RGD"/>
</dbReference>
<dbReference type="GO" id="GO:0005737">
    <property type="term" value="C:cytoplasm"/>
    <property type="evidence" value="ECO:0000314"/>
    <property type="project" value="UniProtKB"/>
</dbReference>
<dbReference type="GO" id="GO:0005829">
    <property type="term" value="C:cytosol"/>
    <property type="evidence" value="ECO:0000266"/>
    <property type="project" value="RGD"/>
</dbReference>
<dbReference type="GO" id="GO:0030425">
    <property type="term" value="C:dendrite"/>
    <property type="evidence" value="ECO:0000314"/>
    <property type="project" value="UniProtKB"/>
</dbReference>
<dbReference type="GO" id="GO:0030175">
    <property type="term" value="C:filopodium"/>
    <property type="evidence" value="ECO:0000266"/>
    <property type="project" value="RGD"/>
</dbReference>
<dbReference type="GO" id="GO:0098978">
    <property type="term" value="C:glutamatergic synapse"/>
    <property type="evidence" value="ECO:0000314"/>
    <property type="project" value="SynGO"/>
</dbReference>
<dbReference type="GO" id="GO:0030426">
    <property type="term" value="C:growth cone"/>
    <property type="evidence" value="ECO:0000314"/>
    <property type="project" value="UniProtKB"/>
</dbReference>
<dbReference type="GO" id="GO:0030027">
    <property type="term" value="C:lamellipodium"/>
    <property type="evidence" value="ECO:0000266"/>
    <property type="project" value="RGD"/>
</dbReference>
<dbReference type="GO" id="GO:0016020">
    <property type="term" value="C:membrane"/>
    <property type="evidence" value="ECO:0000314"/>
    <property type="project" value="UniProtKB"/>
</dbReference>
<dbReference type="GO" id="GO:0031594">
    <property type="term" value="C:neuromuscular junction"/>
    <property type="evidence" value="ECO:0000314"/>
    <property type="project" value="UniProtKB"/>
</dbReference>
<dbReference type="GO" id="GO:0043005">
    <property type="term" value="C:neuron projection"/>
    <property type="evidence" value="ECO:0000314"/>
    <property type="project" value="ARUK-UCL"/>
</dbReference>
<dbReference type="GO" id="GO:0043025">
    <property type="term" value="C:neuronal cell body"/>
    <property type="evidence" value="ECO:0000314"/>
    <property type="project" value="UniProtKB"/>
</dbReference>
<dbReference type="GO" id="GO:0005634">
    <property type="term" value="C:nucleus"/>
    <property type="evidence" value="ECO:0000314"/>
    <property type="project" value="UniProtKB"/>
</dbReference>
<dbReference type="GO" id="GO:0043204">
    <property type="term" value="C:perikaryon"/>
    <property type="evidence" value="ECO:0007669"/>
    <property type="project" value="UniProtKB-SubCell"/>
</dbReference>
<dbReference type="GO" id="GO:0005886">
    <property type="term" value="C:plasma membrane"/>
    <property type="evidence" value="ECO:0007669"/>
    <property type="project" value="UniProtKB-SubCell"/>
</dbReference>
<dbReference type="GO" id="GO:0098794">
    <property type="term" value="C:postsynapse"/>
    <property type="evidence" value="ECO:0000314"/>
    <property type="project" value="SynGO"/>
</dbReference>
<dbReference type="GO" id="GO:0014069">
    <property type="term" value="C:postsynaptic density"/>
    <property type="evidence" value="ECO:0000314"/>
    <property type="project" value="UniProtKB"/>
</dbReference>
<dbReference type="GO" id="GO:0098793">
    <property type="term" value="C:presynapse"/>
    <property type="evidence" value="ECO:0000315"/>
    <property type="project" value="ARUK-UCL"/>
</dbReference>
<dbReference type="GO" id="GO:0016533">
    <property type="term" value="C:protein kinase 5 complex"/>
    <property type="evidence" value="ECO:0000314"/>
    <property type="project" value="RGD"/>
</dbReference>
<dbReference type="GO" id="GO:0098685">
    <property type="term" value="C:Schaffer collateral - CA1 synapse"/>
    <property type="evidence" value="ECO:0000314"/>
    <property type="project" value="SynGO"/>
</dbReference>
<dbReference type="GO" id="GO:0030549">
    <property type="term" value="F:acetylcholine receptor activator activity"/>
    <property type="evidence" value="ECO:0000250"/>
    <property type="project" value="UniProtKB"/>
</dbReference>
<dbReference type="GO" id="GO:0005524">
    <property type="term" value="F:ATP binding"/>
    <property type="evidence" value="ECO:0007669"/>
    <property type="project" value="UniProtKB-KW"/>
</dbReference>
<dbReference type="GO" id="GO:0004693">
    <property type="term" value="F:cyclin-dependent protein serine/threonine kinase activity"/>
    <property type="evidence" value="ECO:0000314"/>
    <property type="project" value="UniProtKB"/>
</dbReference>
<dbReference type="GO" id="GO:0008092">
    <property type="term" value="F:cytoskeletal protein binding"/>
    <property type="evidence" value="ECO:0000353"/>
    <property type="project" value="BHF-UCL"/>
</dbReference>
<dbReference type="GO" id="GO:0046875">
    <property type="term" value="F:ephrin receptor binding"/>
    <property type="evidence" value="ECO:0000353"/>
    <property type="project" value="UniProtKB"/>
</dbReference>
<dbReference type="GO" id="GO:0005176">
    <property type="term" value="F:ErbB-2 class receptor binding"/>
    <property type="evidence" value="ECO:0000250"/>
    <property type="project" value="UniProtKB"/>
</dbReference>
<dbReference type="GO" id="GO:0043125">
    <property type="term" value="F:ErbB-3 class receptor binding"/>
    <property type="evidence" value="ECO:0000250"/>
    <property type="project" value="UniProtKB"/>
</dbReference>
<dbReference type="GO" id="GO:0035173">
    <property type="term" value="F:histone kinase activity"/>
    <property type="evidence" value="ECO:0000314"/>
    <property type="project" value="RGD"/>
</dbReference>
<dbReference type="GO" id="GO:0051879">
    <property type="term" value="F:Hsp90 protein binding"/>
    <property type="evidence" value="ECO:0000266"/>
    <property type="project" value="RGD"/>
</dbReference>
<dbReference type="GO" id="GO:0016301">
    <property type="term" value="F:kinase activity"/>
    <property type="evidence" value="ECO:0000314"/>
    <property type="project" value="UniProtKB"/>
</dbReference>
<dbReference type="GO" id="GO:0002039">
    <property type="term" value="F:p53 binding"/>
    <property type="evidence" value="ECO:0000266"/>
    <property type="project" value="RGD"/>
</dbReference>
<dbReference type="GO" id="GO:0004672">
    <property type="term" value="F:protein kinase activity"/>
    <property type="evidence" value="ECO:0000314"/>
    <property type="project" value="MGI"/>
</dbReference>
<dbReference type="GO" id="GO:0019901">
    <property type="term" value="F:protein kinase binding"/>
    <property type="evidence" value="ECO:0000353"/>
    <property type="project" value="RGD"/>
</dbReference>
<dbReference type="GO" id="GO:0106310">
    <property type="term" value="F:protein serine kinase activity"/>
    <property type="evidence" value="ECO:0007669"/>
    <property type="project" value="RHEA"/>
</dbReference>
<dbReference type="GO" id="GO:0004674">
    <property type="term" value="F:protein serine/threonine kinase activity"/>
    <property type="evidence" value="ECO:0000314"/>
    <property type="project" value="UniProtKB"/>
</dbReference>
<dbReference type="GO" id="GO:0050321">
    <property type="term" value="F:tau-protein kinase activity"/>
    <property type="evidence" value="ECO:0000314"/>
    <property type="project" value="UniProtKB"/>
</dbReference>
<dbReference type="GO" id="GO:0006915">
    <property type="term" value="P:apoptotic process"/>
    <property type="evidence" value="ECO:0000266"/>
    <property type="project" value="RGD"/>
</dbReference>
<dbReference type="GO" id="GO:0008306">
    <property type="term" value="P:associative learning"/>
    <property type="evidence" value="ECO:0000266"/>
    <property type="project" value="RGD"/>
</dbReference>
<dbReference type="GO" id="GO:0048675">
    <property type="term" value="P:axon extension"/>
    <property type="evidence" value="ECO:0000304"/>
    <property type="project" value="UniProtKB"/>
</dbReference>
<dbReference type="GO" id="GO:0007409">
    <property type="term" value="P:axonogenesis"/>
    <property type="evidence" value="ECO:0000266"/>
    <property type="project" value="RGD"/>
</dbReference>
<dbReference type="GO" id="GO:0048148">
    <property type="term" value="P:behavioral response to cocaine"/>
    <property type="evidence" value="ECO:0000266"/>
    <property type="project" value="RGD"/>
</dbReference>
<dbReference type="GO" id="GO:0070509">
    <property type="term" value="P:calcium ion import"/>
    <property type="evidence" value="ECO:0000266"/>
    <property type="project" value="RGD"/>
</dbReference>
<dbReference type="GO" id="GO:0051301">
    <property type="term" value="P:cell division"/>
    <property type="evidence" value="ECO:0007669"/>
    <property type="project" value="UniProtKB-KW"/>
</dbReference>
<dbReference type="GO" id="GO:0016477">
    <property type="term" value="P:cell migration"/>
    <property type="evidence" value="ECO:0000266"/>
    <property type="project" value="RGD"/>
</dbReference>
<dbReference type="GO" id="GO:0007160">
    <property type="term" value="P:cell-matrix adhesion"/>
    <property type="evidence" value="ECO:0000266"/>
    <property type="project" value="RGD"/>
</dbReference>
<dbReference type="GO" id="GO:1904646">
    <property type="term" value="P:cellular response to amyloid-beta"/>
    <property type="evidence" value="ECO:0000314"/>
    <property type="project" value="ARUK-UCL"/>
</dbReference>
<dbReference type="GO" id="GO:0021954">
    <property type="term" value="P:central nervous system neuron development"/>
    <property type="evidence" value="ECO:0000266"/>
    <property type="project" value="RGD"/>
</dbReference>
<dbReference type="GO" id="GO:0021695">
    <property type="term" value="P:cerebellar cortex development"/>
    <property type="evidence" value="ECO:0000266"/>
    <property type="project" value="RGD"/>
</dbReference>
<dbReference type="GO" id="GO:0021697">
    <property type="term" value="P:cerebellar cortex formation"/>
    <property type="evidence" value="ECO:0000266"/>
    <property type="project" value="RGD"/>
</dbReference>
<dbReference type="GO" id="GO:0021549">
    <property type="term" value="P:cerebellum development"/>
    <property type="evidence" value="ECO:0000266"/>
    <property type="project" value="RGD"/>
</dbReference>
<dbReference type="GO" id="GO:0021987">
    <property type="term" value="P:cerebral cortex development"/>
    <property type="evidence" value="ECO:0000266"/>
    <property type="project" value="RGD"/>
</dbReference>
<dbReference type="GO" id="GO:0022038">
    <property type="term" value="P:corpus callosum development"/>
    <property type="evidence" value="ECO:0000266"/>
    <property type="project" value="RGD"/>
</dbReference>
<dbReference type="GO" id="GO:0030866">
    <property type="term" value="P:cortical actin cytoskeleton organization"/>
    <property type="evidence" value="ECO:0000315"/>
    <property type="project" value="RGD"/>
</dbReference>
<dbReference type="GO" id="GO:0048813">
    <property type="term" value="P:dendrite morphogenesis"/>
    <property type="evidence" value="ECO:0000266"/>
    <property type="project" value="RGD"/>
</dbReference>
<dbReference type="GO" id="GO:0006974">
    <property type="term" value="P:DNA damage response"/>
    <property type="evidence" value="ECO:0000315"/>
    <property type="project" value="RGD"/>
</dbReference>
<dbReference type="GO" id="GO:0051649">
    <property type="term" value="P:establishment of localization in cell"/>
    <property type="evidence" value="ECO:0000266"/>
    <property type="project" value="RGD"/>
</dbReference>
<dbReference type="GO" id="GO:0060079">
    <property type="term" value="P:excitatory postsynaptic potential"/>
    <property type="evidence" value="ECO:0000266"/>
    <property type="project" value="RGD"/>
</dbReference>
<dbReference type="GO" id="GO:0006887">
    <property type="term" value="P:exocytosis"/>
    <property type="evidence" value="ECO:0000315"/>
    <property type="project" value="RGD"/>
</dbReference>
<dbReference type="GO" id="GO:0030900">
    <property type="term" value="P:forebrain development"/>
    <property type="evidence" value="ECO:0000266"/>
    <property type="project" value="RGD"/>
</dbReference>
<dbReference type="GO" id="GO:0021766">
    <property type="term" value="P:hippocampus development"/>
    <property type="evidence" value="ECO:0000266"/>
    <property type="project" value="RGD"/>
</dbReference>
<dbReference type="GO" id="GO:0006886">
    <property type="term" value="P:intracellular protein transport"/>
    <property type="evidence" value="ECO:0000266"/>
    <property type="project" value="RGD"/>
</dbReference>
<dbReference type="GO" id="GO:0021819">
    <property type="term" value="P:layer formation in cerebral cortex"/>
    <property type="evidence" value="ECO:0000266"/>
    <property type="project" value="RGD"/>
</dbReference>
<dbReference type="GO" id="GO:0007005">
    <property type="term" value="P:mitochondrion organization"/>
    <property type="evidence" value="ECO:0000315"/>
    <property type="project" value="RGD"/>
</dbReference>
<dbReference type="GO" id="GO:0008045">
    <property type="term" value="P:motor neuron axon guidance"/>
    <property type="evidence" value="ECO:0000266"/>
    <property type="project" value="RGD"/>
</dbReference>
<dbReference type="GO" id="GO:0030517">
    <property type="term" value="P:negative regulation of axon extension"/>
    <property type="evidence" value="ECO:0000266"/>
    <property type="project" value="RGD"/>
</dbReference>
<dbReference type="GO" id="GO:1903234">
    <property type="term" value="P:negative regulation of calcium ion-dependent exocytosis of neurotransmitter"/>
    <property type="evidence" value="ECO:0000315"/>
    <property type="project" value="ARUK-UCL"/>
</dbReference>
<dbReference type="GO" id="GO:0045786">
    <property type="term" value="P:negative regulation of cell cycle"/>
    <property type="evidence" value="ECO:0000266"/>
    <property type="project" value="RGD"/>
</dbReference>
<dbReference type="GO" id="GO:0045892">
    <property type="term" value="P:negative regulation of DNA-templated transcription"/>
    <property type="evidence" value="ECO:0000266"/>
    <property type="project" value="RGD"/>
</dbReference>
<dbReference type="GO" id="GO:0046826">
    <property type="term" value="P:negative regulation of protein export from nucleus"/>
    <property type="evidence" value="ECO:0000266"/>
    <property type="project" value="RGD"/>
</dbReference>
<dbReference type="GO" id="GO:0031397">
    <property type="term" value="P:negative regulation of protein ubiquitination"/>
    <property type="evidence" value="ECO:0000266"/>
    <property type="project" value="RGD"/>
</dbReference>
<dbReference type="GO" id="GO:0045861">
    <property type="term" value="P:negative regulation of proteolysis"/>
    <property type="evidence" value="ECO:0000266"/>
    <property type="project" value="RGD"/>
</dbReference>
<dbReference type="GO" id="GO:0031914">
    <property type="term" value="P:negative regulation of synaptic plasticity"/>
    <property type="evidence" value="ECO:0000266"/>
    <property type="project" value="RGD"/>
</dbReference>
<dbReference type="GO" id="GO:0051402">
    <property type="term" value="P:neuron apoptotic process"/>
    <property type="evidence" value="ECO:0000315"/>
    <property type="project" value="RGD"/>
</dbReference>
<dbReference type="GO" id="GO:0030182">
    <property type="term" value="P:neuron differentiation"/>
    <property type="evidence" value="ECO:0000314"/>
    <property type="project" value="UniProtKB"/>
</dbReference>
<dbReference type="GO" id="GO:0001764">
    <property type="term" value="P:neuron migration"/>
    <property type="evidence" value="ECO:0000266"/>
    <property type="project" value="RGD"/>
</dbReference>
<dbReference type="GO" id="GO:0031175">
    <property type="term" value="P:neuron projection development"/>
    <property type="evidence" value="ECO:0000315"/>
    <property type="project" value="UniProtKB"/>
</dbReference>
<dbReference type="GO" id="GO:0048812">
    <property type="term" value="P:neuron projection morphogenesis"/>
    <property type="evidence" value="ECO:0000315"/>
    <property type="project" value="RGD"/>
</dbReference>
<dbReference type="GO" id="GO:0006913">
    <property type="term" value="P:nucleocytoplasmic transport"/>
    <property type="evidence" value="ECO:0000315"/>
    <property type="project" value="RGD"/>
</dbReference>
<dbReference type="GO" id="GO:0048709">
    <property type="term" value="P:oligodendrocyte differentiation"/>
    <property type="evidence" value="ECO:0000266"/>
    <property type="project" value="RGD"/>
</dbReference>
<dbReference type="GO" id="GO:0045956">
    <property type="term" value="P:positive regulation of calcium ion-dependent exocytosis"/>
    <property type="evidence" value="ECO:0000266"/>
    <property type="project" value="RGD"/>
</dbReference>
<dbReference type="GO" id="GO:0034352">
    <property type="term" value="P:positive regulation of glial cell apoptotic process"/>
    <property type="evidence" value="ECO:0000315"/>
    <property type="project" value="RGD"/>
</dbReference>
<dbReference type="GO" id="GO:0043525">
    <property type="term" value="P:positive regulation of neuron apoptotic process"/>
    <property type="evidence" value="ECO:0000314"/>
    <property type="project" value="UniProtKB"/>
</dbReference>
<dbReference type="GO" id="GO:0099533">
    <property type="term" value="P:positive regulation of presynaptic cytosolic calcium concentration"/>
    <property type="evidence" value="ECO:0000315"/>
    <property type="project" value="ARUK-UCL"/>
</dbReference>
<dbReference type="GO" id="GO:0090314">
    <property type="term" value="P:positive regulation of protein targeting to membrane"/>
    <property type="evidence" value="ECO:0000266"/>
    <property type="project" value="RGD"/>
</dbReference>
<dbReference type="GO" id="GO:0035418">
    <property type="term" value="P:protein localization to synapse"/>
    <property type="evidence" value="ECO:0000266"/>
    <property type="project" value="RGD"/>
</dbReference>
<dbReference type="GO" id="GO:0006468">
    <property type="term" value="P:protein phosphorylation"/>
    <property type="evidence" value="ECO:0000314"/>
    <property type="project" value="MGI"/>
</dbReference>
<dbReference type="GO" id="GO:0032801">
    <property type="term" value="P:receptor catabolic process"/>
    <property type="evidence" value="ECO:0000266"/>
    <property type="project" value="RGD"/>
</dbReference>
<dbReference type="GO" id="GO:0043113">
    <property type="term" value="P:receptor clustering"/>
    <property type="evidence" value="ECO:0000266"/>
    <property type="project" value="RGD"/>
</dbReference>
<dbReference type="GO" id="GO:0045055">
    <property type="term" value="P:regulated exocytosis"/>
    <property type="evidence" value="ECO:0000315"/>
    <property type="project" value="RGD"/>
</dbReference>
<dbReference type="GO" id="GO:1901987">
    <property type="term" value="P:regulation of cell cycle phase transition"/>
    <property type="evidence" value="ECO:0000318"/>
    <property type="project" value="GO_Central"/>
</dbReference>
<dbReference type="GO" id="GO:0030334">
    <property type="term" value="P:regulation of cell migration"/>
    <property type="evidence" value="ECO:0000266"/>
    <property type="project" value="RGD"/>
</dbReference>
<dbReference type="GO" id="GO:0061001">
    <property type="term" value="P:regulation of dendritic spine morphogenesis"/>
    <property type="evidence" value="ECO:0000250"/>
    <property type="project" value="UniProtKB"/>
</dbReference>
<dbReference type="GO" id="GO:0060078">
    <property type="term" value="P:regulation of postsynaptic membrane potential"/>
    <property type="evidence" value="ECO:0000266"/>
    <property type="project" value="RGD"/>
</dbReference>
<dbReference type="GO" id="GO:0099509">
    <property type="term" value="P:regulation of presynaptic cytosolic calcium ion concentration"/>
    <property type="evidence" value="ECO:0000314"/>
    <property type="project" value="SynGO"/>
</dbReference>
<dbReference type="GO" id="GO:1903076">
    <property type="term" value="P:regulation of protein localization to plasma membrane"/>
    <property type="evidence" value="ECO:0000266"/>
    <property type="project" value="RGD"/>
</dbReference>
<dbReference type="GO" id="GO:1905806">
    <property type="term" value="P:regulation of synapse pruning"/>
    <property type="evidence" value="ECO:0000314"/>
    <property type="project" value="SynGO"/>
</dbReference>
<dbReference type="GO" id="GO:0048167">
    <property type="term" value="P:regulation of synaptic plasticity"/>
    <property type="evidence" value="ECO:0000315"/>
    <property type="project" value="UniProtKB"/>
</dbReference>
<dbReference type="GO" id="GO:0051966">
    <property type="term" value="P:regulation of synaptic transmission, glutamatergic"/>
    <property type="evidence" value="ECO:0000266"/>
    <property type="project" value="RGD"/>
</dbReference>
<dbReference type="GO" id="GO:0042220">
    <property type="term" value="P:response to cocaine"/>
    <property type="evidence" value="ECO:0000266"/>
    <property type="project" value="RGD"/>
</dbReference>
<dbReference type="GO" id="GO:0048511">
    <property type="term" value="P:rhythmic process"/>
    <property type="evidence" value="ECO:0007669"/>
    <property type="project" value="UniProtKB-KW"/>
</dbReference>
<dbReference type="GO" id="GO:0014044">
    <property type="term" value="P:Schwann cell development"/>
    <property type="evidence" value="ECO:0000266"/>
    <property type="project" value="RGD"/>
</dbReference>
<dbReference type="GO" id="GO:0019233">
    <property type="term" value="P:sensory perception of pain"/>
    <property type="evidence" value="ECO:0000266"/>
    <property type="project" value="RGD"/>
</dbReference>
<dbReference type="GO" id="GO:0007519">
    <property type="term" value="P:skeletal muscle tissue development"/>
    <property type="evidence" value="ECO:0000270"/>
    <property type="project" value="RGD"/>
</dbReference>
<dbReference type="GO" id="GO:0007416">
    <property type="term" value="P:synapse assembly"/>
    <property type="evidence" value="ECO:0000266"/>
    <property type="project" value="RGD"/>
</dbReference>
<dbReference type="GO" id="GO:0001963">
    <property type="term" value="P:synaptic transmission, dopaminergic"/>
    <property type="evidence" value="ECO:0000266"/>
    <property type="project" value="RGD"/>
</dbReference>
<dbReference type="GO" id="GO:0035249">
    <property type="term" value="P:synaptic transmission, glutamatergic"/>
    <property type="evidence" value="ECO:0000266"/>
    <property type="project" value="RGD"/>
</dbReference>
<dbReference type="GO" id="GO:0048488">
    <property type="term" value="P:synaptic vesicle endocytosis"/>
    <property type="evidence" value="ECO:0000315"/>
    <property type="project" value="RGD"/>
</dbReference>
<dbReference type="GO" id="GO:0048489">
    <property type="term" value="P:synaptic vesicle transport"/>
    <property type="evidence" value="ECO:0000318"/>
    <property type="project" value="GO_Central"/>
</dbReference>
<dbReference type="GO" id="GO:0021537">
    <property type="term" value="P:telencephalon development"/>
    <property type="evidence" value="ECO:0000266"/>
    <property type="project" value="RGD"/>
</dbReference>
<dbReference type="GO" id="GO:0008542">
    <property type="term" value="P:visual learning"/>
    <property type="evidence" value="ECO:0000266"/>
    <property type="project" value="RGD"/>
</dbReference>
<dbReference type="CDD" id="cd07839">
    <property type="entry name" value="STKc_CDK5"/>
    <property type="match status" value="1"/>
</dbReference>
<dbReference type="FunFam" id="3.30.200.20:FF:000144">
    <property type="entry name" value="Cyclin-dependent kinase 5"/>
    <property type="match status" value="1"/>
</dbReference>
<dbReference type="FunFam" id="1.10.510.10:FF:000184">
    <property type="entry name" value="cyclin-dependent kinase 5 homolog"/>
    <property type="match status" value="1"/>
</dbReference>
<dbReference type="Gene3D" id="3.30.200.20">
    <property type="entry name" value="Phosphorylase Kinase, domain 1"/>
    <property type="match status" value="1"/>
</dbReference>
<dbReference type="Gene3D" id="1.10.510.10">
    <property type="entry name" value="Transferase(Phosphotransferase) domain 1"/>
    <property type="match status" value="1"/>
</dbReference>
<dbReference type="InterPro" id="IPR050108">
    <property type="entry name" value="CDK"/>
</dbReference>
<dbReference type="InterPro" id="IPR011009">
    <property type="entry name" value="Kinase-like_dom_sf"/>
</dbReference>
<dbReference type="InterPro" id="IPR000719">
    <property type="entry name" value="Prot_kinase_dom"/>
</dbReference>
<dbReference type="InterPro" id="IPR017441">
    <property type="entry name" value="Protein_kinase_ATP_BS"/>
</dbReference>
<dbReference type="InterPro" id="IPR008271">
    <property type="entry name" value="Ser/Thr_kinase_AS"/>
</dbReference>
<dbReference type="PANTHER" id="PTHR24056">
    <property type="entry name" value="CELL DIVISION PROTEIN KINASE"/>
    <property type="match status" value="1"/>
</dbReference>
<dbReference type="PANTHER" id="PTHR24056:SF46">
    <property type="entry name" value="CYCLIN-DEPENDENT KINASE 5"/>
    <property type="match status" value="1"/>
</dbReference>
<dbReference type="Pfam" id="PF00069">
    <property type="entry name" value="Pkinase"/>
    <property type="match status" value="1"/>
</dbReference>
<dbReference type="SMART" id="SM00220">
    <property type="entry name" value="S_TKc"/>
    <property type="match status" value="1"/>
</dbReference>
<dbReference type="SUPFAM" id="SSF56112">
    <property type="entry name" value="Protein kinase-like (PK-like)"/>
    <property type="match status" value="1"/>
</dbReference>
<dbReference type="PROSITE" id="PS00107">
    <property type="entry name" value="PROTEIN_KINASE_ATP"/>
    <property type="match status" value="1"/>
</dbReference>
<dbReference type="PROSITE" id="PS50011">
    <property type="entry name" value="PROTEIN_KINASE_DOM"/>
    <property type="match status" value="1"/>
</dbReference>
<dbReference type="PROSITE" id="PS00108">
    <property type="entry name" value="PROTEIN_KINASE_ST"/>
    <property type="match status" value="1"/>
</dbReference>
<accession>Q03114</accession>
<protein>
    <recommendedName>
        <fullName evidence="11">Cyclin-dependent kinase 5</fullName>
        <ecNumber>2.7.11.1</ecNumber>
    </recommendedName>
    <alternativeName>
        <fullName evidence="10">Cell division protein kinase 5</fullName>
    </alternativeName>
    <alternativeName>
        <fullName>Cyclin-dependent-like kinase 5</fullName>
    </alternativeName>
    <alternativeName>
        <fullName evidence="9">Serine/threonine-protein kinase PSSALRE</fullName>
    </alternativeName>
    <alternativeName>
        <fullName evidence="4">Tau protein kinase II catalytic subunit</fullName>
        <shortName evidence="4">TPKII catalytic subunit</shortName>
    </alternativeName>
</protein>
<proteinExistence type="evidence at protein level"/>
<comment type="function">
    <text evidence="1 7 8">Proline-directed serine/threonine-protein kinase essential for neuronal cell cycle arrest and differentiation and may be involved in apoptotic cell death in neuronal diseases by triggering abortive cell cycle re-entry. Interacts with D1 and D3-type G1 cyclins. Phosphorylates SRC, NOS3, VIM/vimentin, p35/CDK5R1, MEF2A, SIPA1L1, SH3GLB1, PXN, PAK1, MCAM/MUC18, SEPT5, SYN1, DNM1, AMPH, SYNJ1, CDK16, RAC1, RHOA, CDC42, TONEBP/NFAT5, MAPT/TAU, MAP1B, histone H1, p53/TP53, HDAC1, APEX1, PTK2/FAK1, huntingtin/HTT, ATM, MAP2, NEFH and NEFM. Regulates several neuronal development and physiological processes including neuronal survival, migration and differentiation, axonal and neurite growth, synaptogenesis, oligodendrocyte differentiation, synaptic plasticity and neurotransmission, by phosphorylating key proteins. Negatively regulates the CACNA1B/CAV2.2 -mediated Ca(2+) release probability at hippocampal neuronal soma and synaptic terminals (PubMed:23699505). Activated by interaction with CDK5R1 (p35) and CDK5R2 (p39), especially in postmitotic neurons, and promotes CDK5R1 (p35) expression in an autostimulation loop. Phosphorylates many downstream substrates such as Rho and Ras family small GTPases (e.g. PAK1, RAC1, RHOA, CDC42) or microtubule-binding proteins (e.g. MAPT/TAU, MAP2, MAP1B), and modulates actin dynamics to regulate neurite growth and/or spine morphogenesis. Also phosphorylates exocytosis associated proteins such as MCAM/MUC18, SEPT5, SYN1, and CDK16/PCTAIRE1 as well as endocytosis associated proteins such as DNM1, AMPH and SYNJ1 at synaptic terminals. In the mature central nervous system (CNS), regulates neurotransmitter movements by phosphorylating substrates associated with neurotransmitter release and synapse plasticity; synaptic vesicle exocytosis, vesicles fusion with the presynaptic membrane, and endocytosis. Promotes cell survival by activating anti-apoptotic proteins BCL2 and STAT3, and negatively regulating of JNK3/MAPK10 activity. Phosphorylation of p53/TP53 in response to genotoxic and oxidative stresses enhances its stabilization by preventing ubiquitin ligase-mediated proteasomal degradation, and induces transactivation of p53/TP53 target genes, thus regulating apoptosis. Phosphorylation of p35/CDK5R1 enhances its stabilization by preventing calpain-mediated proteolysis producing p25/CDK5R1 and avoiding ubiquitin ligase-mediated proteasomal degradation. During aberrant cell-cycle activity and DNA damage, p25/CDK5 activity elicits cell-cycle activity and double-strand DNA breaks that precedes neuronal death by deregulating HDAC1. DNA damage triggered phosphorylation of huntingtin/HTT in nuclei of neurons protects neurons against polyglutamine expansion as well as DNA damage mediated toxicity. Phosphorylation of PXN reduces its interaction with PTK2/FAK1 in matrix-cell focal adhesions (MCFA) during oligodendrocytes (OLs) differentiation. Negative regulator of Wnt/beta-catenin signaling pathway. Activator of the GAIT (IFN-gamma-activated inhibitor of translation) pathway, which suppresses expression of a post-transcriptional regulon of proinflammatory genes in myeloid cells; phosphorylates the linker domain of glutamyl-prolyl tRNA synthetase (EPRS) in a IFN-gamma-dependent manner, the initial event in assembly of the GAIT complex. Phosphorylation of SH3GLB1 is required for autophagy induction in starved neurons. Phosphorylation of TONEBP/NFAT5 in response to osmotic stress mediates its rapid nuclear localization. MEF2 is inactivated by phosphorylation in nucleus in response to neurotoxin, thus leading to neuronal apoptosis. APEX1 AP-endodeoxyribonuclease is repressed by phosphorylation, resulting in accumulation of DNA damage and contributing to neuronal death. NOS3 phosphorylation down regulates NOS3-derived nitrite (NO) levels. SRC phosphorylation mediates its ubiquitin-dependent degradation and thus leads to cytoskeletal reorganization. May regulate endothelial cell migration and angiogenesis via the modulation of lamellipodia formation. Involved in dendritic spine morphogenesis by mediating the EFNA1-EPHA4 signaling. The complex p35/CDK5 participates in the regulation of the circadian clock by modulating the function of CLOCK protein: phosphorylates CLOCK at 'Thr-451' and 'Thr-461' and regulates the transcriptional activity of the CLOCK-BMAL1 heterodimer in association with altered stability and subcellular distribution (By similarity).</text>
</comment>
<comment type="catalytic activity">
    <reaction>
        <text>L-seryl-[protein] + ATP = O-phospho-L-seryl-[protein] + ADP + H(+)</text>
        <dbReference type="Rhea" id="RHEA:17989"/>
        <dbReference type="Rhea" id="RHEA-COMP:9863"/>
        <dbReference type="Rhea" id="RHEA-COMP:11604"/>
        <dbReference type="ChEBI" id="CHEBI:15378"/>
        <dbReference type="ChEBI" id="CHEBI:29999"/>
        <dbReference type="ChEBI" id="CHEBI:30616"/>
        <dbReference type="ChEBI" id="CHEBI:83421"/>
        <dbReference type="ChEBI" id="CHEBI:456216"/>
        <dbReference type="EC" id="2.7.11.1"/>
    </reaction>
</comment>
<comment type="catalytic activity">
    <reaction>
        <text>L-threonyl-[protein] + ATP = O-phospho-L-threonyl-[protein] + ADP + H(+)</text>
        <dbReference type="Rhea" id="RHEA:46608"/>
        <dbReference type="Rhea" id="RHEA-COMP:11060"/>
        <dbReference type="Rhea" id="RHEA-COMP:11605"/>
        <dbReference type="ChEBI" id="CHEBI:15378"/>
        <dbReference type="ChEBI" id="CHEBI:30013"/>
        <dbReference type="ChEBI" id="CHEBI:30616"/>
        <dbReference type="ChEBI" id="CHEBI:61977"/>
        <dbReference type="ChEBI" id="CHEBI:456216"/>
        <dbReference type="EC" id="2.7.11.1"/>
    </reaction>
</comment>
<comment type="activity regulation">
    <text evidence="1">Inhibited by 2-(1-ethyl-2-hydroxyethylamino)-6-benzylamino-9-isopropylpurine (roscovitine), 1-isopropyl-4-aminobenzyl-6-ether-linked benzimidazoles, resveratrol, AT-7519 and olomoucine. Activated by CDK5R1 (p35) and CDK5R2 (p39) during the development of the nervous system; degradation of CDK5R1 (p35) and CDK5R2 (p39) by proteasome result in down regulation of kinase activity, during this process, CDK5 phosphorylates p35 and induces its ubiquitination and subsequent degradation. Kinase activity is mainly determined by the amount of p35 available and subcellular location; reversible association to plasma membrane inhibits activity. Long-term inactivation as well as CDK5R1 (p25)-mediated hyperactivation of CDK5 triggers cell death. The pro-death activity of hyperactivated CDK5 is suppressed by membrane association of CDK5, via myristoylation of p35. Brain-derived neurotrophic factor, glial-derived neurotrophic factor, nerve growth factor (NGF), retinoic acid, laminin and neuregulin promote activity. Neurotoxicity enhances nuclear activity, thus leading to MEF2 phosphorylation and inhibition prior to apoptosis of cortical neurons. Repression by GSTP1 via p25/p35 translocation prevents neurodegeneration (By similarity).</text>
</comment>
<comment type="subunit">
    <text evidence="1 2">Heterodimer composed of a catalytic subunit CDK5 and a regulatory subunit CDK5R1 (p25) and macromolecular complex composed of at least CDK5, CDK5R1 (p35) and CDK5RAP1 or CDK5RAP2 or CDK5RAP3. Only the heterodimer shows kinase activity. Under neurotoxic stress and neuronal injury conditions, p35 is cleaved by calpain to generate p25 that hyperactivates CDK5, that becomes functionally disabled and often toxic. Found in a trimolecular complex with CABLES1 and ABL1. Interacts with CABLES1 and CABLES2 (By similarity). Interacts with AATK and GSTP1. Binds to HDAC1 when in complex with p25. Interaction with myristoylation p35 promotes CDK5 association with membranes. Both isoforms 1 and 2 interacts with beta-catenin/CTNNB1. Interacts with delta-catenin/CTNND2 and APEX1. Interacts with P53/TP53 in neurons. Interacts with PTK2/FAK1 (By similarity). Interacts with EPHA4; may mediate the activation of NGEF by EPHA4. The complex p35/CDK5 interacts with CLOCK (By similarity). Interacts with HTR6 (By similarity).</text>
</comment>
<comment type="interaction">
    <interactant intactId="EBI-2008531">
        <id>Q03114</id>
    </interactant>
    <interactant intactId="EBI-2008489">
        <id>P61810</id>
        <label>Cdk5r1</label>
    </interactant>
    <organismsDiffer>false</organismsDiffer>
    <experiments>3</experiments>
</comment>
<comment type="interaction">
    <interactant intactId="EBI-2008531">
        <id>Q03114</id>
    </interactant>
    <interactant intactId="EBI-7287667">
        <id>Q63604</id>
        <label>Ntrk2</label>
    </interactant>
    <organismsDiffer>false</organismsDiffer>
    <experiments>5</experiments>
</comment>
<comment type="interaction">
    <interactant intactId="EBI-2008531">
        <id>Q03114</id>
    </interactant>
    <interactant intactId="EBI-7365348">
        <id>Q03351</id>
        <label>Ntrk3</label>
    </interactant>
    <organismsDiffer>false</organismsDiffer>
    <experiments>2</experiments>
</comment>
<comment type="interaction">
    <interactant intactId="EBI-2008531">
        <id>Q03114</id>
    </interactant>
    <interactant intactId="EBI-3904881">
        <id>Q16620</id>
        <label>NTRK2</label>
    </interactant>
    <organismsDiffer>true</organismsDiffer>
    <experiments>3</experiments>
</comment>
<comment type="subcellular location">
    <subcellularLocation>
        <location evidence="2">Cytoplasm</location>
    </subcellularLocation>
    <subcellularLocation>
        <location evidence="3">Nucleus</location>
    </subcellularLocation>
    <subcellularLocation>
        <location evidence="3">Cell membrane</location>
        <topology evidence="1">Peripheral membrane protein</topology>
    </subcellularLocation>
    <subcellularLocation>
        <location evidence="1">Perikaryon</location>
    </subcellularLocation>
    <subcellularLocation>
        <location evidence="2">Cell projection</location>
        <location evidence="2">Lamellipodium</location>
    </subcellularLocation>
    <subcellularLocation>
        <location evidence="2">Cell projection</location>
        <location evidence="2">Growth cone</location>
    </subcellularLocation>
    <subcellularLocation>
        <location evidence="1">Nucleus</location>
    </subcellularLocation>
    <subcellularLocation>
        <location evidence="8">Postsynaptic density</location>
    </subcellularLocation>
    <subcellularLocation>
        <location evidence="8">Synapse</location>
    </subcellularLocation>
    <text evidence="1">In axonal growth cone with extension to the peripheral lamellipodia (By similarity). Under neurotoxic stress and neuronal injury conditions, CDK5R1 (p35) is cleaved by calpain to generate CDK5R1 (p25) in response to increased intracellular calcium. The elevated level of p25, when in complex with CDK5, leads to its subcellular misallocation as well as its hyperactivation. Colocalizes with CTNND2 in the cell body of neuronal cells, and with CTNNB1 in the cell-cell contacts and plasma membrane of undifferentiated and differentiated neuroblastoma cells. Reversibly attached to the plasma membrane in an inactive form when complexed to dephosphorylated p35 or CDK5R2 (p39), p35 phosphorylation releases this attachment and activates CDK5 (By similarity).</text>
</comment>
<comment type="tissue specificity">
    <text evidence="8">Expressed in hippocampal neuronal synaptic termini (at protein level) (PubMed:23699505). Expressed predominantly in post-mitotic neurons of the central and peripheral nervous system.</text>
</comment>
<comment type="PTM">
    <text evidence="1">Phosphorylation on Tyr-15 by ABL1 and FYN, and on Ser-159 by casein kinase 1 promotes kinase activity. By contrast, phosphorylation at Thr-14 inhibits activity (By similarity).</text>
</comment>
<comment type="PTM">
    <text evidence="1">Phosphorylation at Ser-159 is essential for maximal catalytic activity.</text>
</comment>
<comment type="similarity">
    <text evidence="10">Belongs to the protein kinase superfamily. CMGC Ser/Thr protein kinase family. CDC2/CDKX subfamily.</text>
</comment>
<name>CDK5_RAT</name>
<feature type="chain" id="PRO_0000085786" description="Cyclin-dependent kinase 5">
    <location>
        <begin position="1"/>
        <end position="292"/>
    </location>
</feature>
<feature type="domain" description="Protein kinase" evidence="5">
    <location>
        <begin position="4"/>
        <end position="286"/>
    </location>
</feature>
<feature type="active site" description="Proton acceptor" evidence="5 6">
    <location>
        <position position="126"/>
    </location>
</feature>
<feature type="binding site" evidence="5">
    <location>
        <begin position="10"/>
        <end position="18"/>
    </location>
    <ligand>
        <name>ATP</name>
        <dbReference type="ChEBI" id="CHEBI:30616"/>
    </ligand>
</feature>
<feature type="binding site" evidence="5">
    <location>
        <position position="33"/>
    </location>
    <ligand>
        <name>ATP</name>
        <dbReference type="ChEBI" id="CHEBI:30616"/>
    </ligand>
</feature>
<feature type="modified residue" description="Phosphotyrosine; by ABL1, EPHA4 and FYN" evidence="3">
    <location>
        <position position="15"/>
    </location>
</feature>
<feature type="modified residue" description="Phosphothreonine" evidence="3">
    <location>
        <position position="17"/>
    </location>
</feature>
<feature type="modified residue" description="N6-acetyllysine" evidence="3">
    <location>
        <position position="56"/>
    </location>
</feature>
<feature type="modified residue" description="Phosphoserine" evidence="3">
    <location>
        <position position="72"/>
    </location>
</feature>
<feature type="modified residue" description="Phosphoserine" evidence="3">
    <location>
        <position position="159"/>
    </location>
</feature>
<reference key="1">
    <citation type="journal article" date="1992" name="Cell">
        <title>D type cyclins associate with multiple protein kinases and the DNA replication and repair factor PCNA.</title>
        <authorList>
            <person name="Xiong Y."/>
            <person name="Zhang H."/>
            <person name="Beach D.H."/>
        </authorList>
    </citation>
    <scope>NUCLEOTIDE SEQUENCE [MRNA]</scope>
</reference>
<reference key="2">
    <citation type="journal article" date="1992" name="Proc. Natl. Acad. Sci. U.S.A.">
        <title>Neuronal cdc2-like kinase: a cdc2-related protein kinase with predominantly neuronal expression.</title>
        <authorList>
            <person name="Hellmich M.R."/>
            <person name="Pant H.C."/>
            <person name="Wada E."/>
            <person name="Battey J.F."/>
        </authorList>
    </citation>
    <scope>NUCLEOTIDE SEQUENCE [MRNA]</scope>
    <source>
        <tissue>Brain</tissue>
    </source>
</reference>
<reference key="3">
    <citation type="journal article" date="2003" name="Biochem. Biophys. Res. Commun.">
        <title>Apoptosis-associated tyrosine kinase is a Cdk5 activator p35 binding protein.</title>
        <authorList>
            <person name="Honma N."/>
            <person name="Asada A."/>
            <person name="Takeshita S."/>
            <person name="Enomoto M."/>
            <person name="Yamakawa E."/>
            <person name="Tsutsumi K."/>
            <person name="Saito T."/>
            <person name="Satoh T."/>
            <person name="Itoh H."/>
            <person name="Kaziro Y."/>
            <person name="Kishimoto T."/>
            <person name="Hisanaga S."/>
        </authorList>
    </citation>
    <scope>INTERACTION WITH AATK</scope>
</reference>
<reference key="4">
    <citation type="journal article" date="2007" name="Nat. Neurosci.">
        <title>Cdk5 regulates EphA4-mediated dendritic spine retraction through an ephexin1-dependent mechanism.</title>
        <authorList>
            <person name="Fu W.Y."/>
            <person name="Chen Y."/>
            <person name="Sahin M."/>
            <person name="Zhao X.S."/>
            <person name="Shi L."/>
            <person name="Bikoff J.B."/>
            <person name="Lai K.O."/>
            <person name="Yung W.H."/>
            <person name="Fu A.K."/>
            <person name="Greenberg M.E."/>
            <person name="Ip N.Y."/>
        </authorList>
    </citation>
    <scope>INTERACTION WITH EPHA4</scope>
    <scope>SUBCELLULAR LOCATION</scope>
</reference>
<reference key="5">
    <citation type="journal article" date="2008" name="Neuron">
        <title>Critical role of CDK5 and Polo-like kinase 2 in homeostatic synaptic plasticity during elevated activity.</title>
        <authorList>
            <person name="Seeburg D.P."/>
            <person name="Feliu-Mojer M."/>
            <person name="Gaiottino J."/>
            <person name="Pak D.T."/>
            <person name="Sheng M."/>
        </authorList>
    </citation>
    <scope>FUNCTION IN PHOSPHORYLATION OF SIPA1L1</scope>
</reference>
<reference key="6">
    <citation type="journal article" date="2013" name="J. Neurosci.">
        <title>Balance of calcineurin Aalpha and CDK5 activities sets release probability at nerve terminals.</title>
        <authorList>
            <person name="Kim S.H."/>
            <person name="Ryan T.A."/>
        </authorList>
    </citation>
    <scope>FUNCTION</scope>
    <scope>TISSUE SPECIFICITY</scope>
</reference>
<sequence length="292" mass="33254">MQKYEKLEKIGEGTYGTVFKAKNRETHEIVALKRVRLDDDDEGVPSSALREICLLKELKHKNIVRLHDVLHSDKKLTLVFEFCDQDLKKYFDSCNGDLDPEIVKSLLFQLLKGLGFCHSRNVLHRDLKPQNLLINRNGELKLADFGLARAFGIPVRCYSAEVVTLWYRPPDVLFGAKLYSTSIDMWSAGCIFAELANAGRPLFPGNDVDDQLKRIFRLLGTPTEEQWPAMTKLPDYKPYPMYPATTSLVNVVPKLNATGRDLLQNLLKCNPVQRISAEEALQHPYFSDFCPP</sequence>
<evidence type="ECO:0000250" key="1"/>
<evidence type="ECO:0000250" key="2">
    <source>
        <dbReference type="UniProtKB" id="P49615"/>
    </source>
</evidence>
<evidence type="ECO:0000250" key="3">
    <source>
        <dbReference type="UniProtKB" id="Q00535"/>
    </source>
</evidence>
<evidence type="ECO:0000250" key="4">
    <source>
        <dbReference type="UniProtKB" id="Q02399"/>
    </source>
</evidence>
<evidence type="ECO:0000255" key="5">
    <source>
        <dbReference type="PROSITE-ProRule" id="PRU00159"/>
    </source>
</evidence>
<evidence type="ECO:0000255" key="6">
    <source>
        <dbReference type="PROSITE-ProRule" id="PRU10027"/>
    </source>
</evidence>
<evidence type="ECO:0000269" key="7">
    <source>
    </source>
</evidence>
<evidence type="ECO:0000269" key="8">
    <source>
    </source>
</evidence>
<evidence type="ECO:0000303" key="9">
    <source>
    </source>
</evidence>
<evidence type="ECO:0000305" key="10"/>
<evidence type="ECO:0000312" key="11">
    <source>
        <dbReference type="RGD" id="70514"/>
    </source>
</evidence>
<keyword id="KW-0007">Acetylation</keyword>
<keyword id="KW-0053">Apoptosis</keyword>
<keyword id="KW-0067">ATP-binding</keyword>
<keyword id="KW-0090">Biological rhythms</keyword>
<keyword id="KW-0131">Cell cycle</keyword>
<keyword id="KW-0132">Cell division</keyword>
<keyword id="KW-1003">Cell membrane</keyword>
<keyword id="KW-0966">Cell projection</keyword>
<keyword id="KW-0963">Cytoplasm</keyword>
<keyword id="KW-0418">Kinase</keyword>
<keyword id="KW-0472">Membrane</keyword>
<keyword id="KW-0523">Neurodegeneration</keyword>
<keyword id="KW-0524">Neurogenesis</keyword>
<keyword id="KW-0547">Nucleotide-binding</keyword>
<keyword id="KW-0539">Nucleus</keyword>
<keyword id="KW-0597">Phosphoprotein</keyword>
<keyword id="KW-1185">Reference proteome</keyword>
<keyword id="KW-0723">Serine/threonine-protein kinase</keyword>
<keyword id="KW-0770">Synapse</keyword>
<keyword id="KW-0808">Transferase</keyword>
<gene>
    <name evidence="11" type="primary">Cdk5</name>
    <name evidence="11" type="synonym">Cdkn5</name>
    <name evidence="2" type="synonym">PSSALRE</name>
</gene>
<organism>
    <name type="scientific">Rattus norvegicus</name>
    <name type="common">Rat</name>
    <dbReference type="NCBI Taxonomy" id="10116"/>
    <lineage>
        <taxon>Eukaryota</taxon>
        <taxon>Metazoa</taxon>
        <taxon>Chordata</taxon>
        <taxon>Craniata</taxon>
        <taxon>Vertebrata</taxon>
        <taxon>Euteleostomi</taxon>
        <taxon>Mammalia</taxon>
        <taxon>Eutheria</taxon>
        <taxon>Euarchontoglires</taxon>
        <taxon>Glires</taxon>
        <taxon>Rodentia</taxon>
        <taxon>Myomorpha</taxon>
        <taxon>Muroidea</taxon>
        <taxon>Muridae</taxon>
        <taxon>Murinae</taxon>
        <taxon>Rattus</taxon>
    </lineage>
</organism>